<organism>
    <name type="scientific">Staphylococcus aureus (strain MSSA476)</name>
    <dbReference type="NCBI Taxonomy" id="282459"/>
    <lineage>
        <taxon>Bacteria</taxon>
        <taxon>Bacillati</taxon>
        <taxon>Bacillota</taxon>
        <taxon>Bacilli</taxon>
        <taxon>Bacillales</taxon>
        <taxon>Staphylococcaceae</taxon>
        <taxon>Staphylococcus</taxon>
    </lineage>
</organism>
<feature type="signal peptide" evidence="2">
    <location>
        <begin position="1"/>
        <end position="28"/>
    </location>
</feature>
<feature type="chain" id="PRO_0000286683" description="FPRL1 inhibitory protein">
    <location>
        <begin position="29"/>
        <end position="132"/>
    </location>
</feature>
<gene>
    <name type="primary">flr</name>
    <name type="ordered locus">SAS1089</name>
</gene>
<sequence>MKKNITKVIIASTVIATGLLTQTNDAKAFFSYEWKGLEIAKNLADQAKKDDERADKLIKEADEKNEHYKGKTVEDLYVIAKKMGKGNTIAVVKIKDGGKNGYYTFDITRPLEEHRKNIPVVKNGEIDSITWY</sequence>
<proteinExistence type="inferred from homology"/>
<comment type="function">
    <text evidence="1">May be involved in countering the first line of host defense mechanisms. Impairs the leukocyte response to FPRL1 agonists by binding directly to host FPRL1 (By similarity).</text>
</comment>
<comment type="subcellular location">
    <subcellularLocation>
        <location evidence="1">Secreted</location>
    </subcellularLocation>
</comment>
<comment type="similarity">
    <text evidence="3">Belongs to the CHIPS/FLIPr family.</text>
</comment>
<name>FLIPR_STAAS</name>
<keyword id="KW-0964">Secreted</keyword>
<keyword id="KW-0732">Signal</keyword>
<keyword id="KW-0843">Virulence</keyword>
<accession>Q6GA59</accession>
<protein>
    <recommendedName>
        <fullName>FPRL1 inhibitory protein</fullName>
        <shortName>FLIPr</shortName>
    </recommendedName>
</protein>
<reference key="1">
    <citation type="journal article" date="2004" name="Proc. Natl. Acad. Sci. U.S.A.">
        <title>Complete genomes of two clinical Staphylococcus aureus strains: evidence for the rapid evolution of virulence and drug resistance.</title>
        <authorList>
            <person name="Holden M.T.G."/>
            <person name="Feil E.J."/>
            <person name="Lindsay J.A."/>
            <person name="Peacock S.J."/>
            <person name="Day N.P.J."/>
            <person name="Enright M.C."/>
            <person name="Foster T.J."/>
            <person name="Moore C.E."/>
            <person name="Hurst L."/>
            <person name="Atkin R."/>
            <person name="Barron A."/>
            <person name="Bason N."/>
            <person name="Bentley S.D."/>
            <person name="Chillingworth C."/>
            <person name="Chillingworth T."/>
            <person name="Churcher C."/>
            <person name="Clark L."/>
            <person name="Corton C."/>
            <person name="Cronin A."/>
            <person name="Doggett J."/>
            <person name="Dowd L."/>
            <person name="Feltwell T."/>
            <person name="Hance Z."/>
            <person name="Harris B."/>
            <person name="Hauser H."/>
            <person name="Holroyd S."/>
            <person name="Jagels K."/>
            <person name="James K.D."/>
            <person name="Lennard N."/>
            <person name="Line A."/>
            <person name="Mayes R."/>
            <person name="Moule S."/>
            <person name="Mungall K."/>
            <person name="Ormond D."/>
            <person name="Quail M.A."/>
            <person name="Rabbinowitsch E."/>
            <person name="Rutherford K.M."/>
            <person name="Sanders M."/>
            <person name="Sharp S."/>
            <person name="Simmonds M."/>
            <person name="Stevens K."/>
            <person name="Whitehead S."/>
            <person name="Barrell B.G."/>
            <person name="Spratt B.G."/>
            <person name="Parkhill J."/>
        </authorList>
    </citation>
    <scope>NUCLEOTIDE SEQUENCE [LARGE SCALE GENOMIC DNA]</scope>
    <source>
        <strain>MSSA476</strain>
    </source>
</reference>
<dbReference type="EMBL" id="BX571857">
    <property type="protein sequence ID" value="CAG42864.1"/>
    <property type="molecule type" value="Genomic_DNA"/>
</dbReference>
<dbReference type="RefSeq" id="WP_000739582.1">
    <property type="nucleotide sequence ID" value="NC_002953.3"/>
</dbReference>
<dbReference type="SMR" id="Q6GA59"/>
<dbReference type="KEGG" id="sas:SAS1089"/>
<dbReference type="HOGENOM" id="CLU_157996_0_0_9"/>
<dbReference type="GO" id="GO:0005576">
    <property type="term" value="C:extracellular region"/>
    <property type="evidence" value="ECO:0007669"/>
    <property type="project" value="UniProtKB-SubCell"/>
</dbReference>
<dbReference type="Gene3D" id="3.10.20.390">
    <property type="entry name" value="Chemotaxis-inhibiting protein CHIPS"/>
    <property type="match status" value="1"/>
</dbReference>
<dbReference type="InterPro" id="IPR023256">
    <property type="entry name" value="FLIPR"/>
</dbReference>
<dbReference type="InterPro" id="IPR038529">
    <property type="entry name" value="FLIPR/CHIP_sf"/>
</dbReference>
<dbReference type="InterPro" id="IPR023253">
    <property type="entry name" value="FLIPR/CHIPS"/>
</dbReference>
<dbReference type="NCBIfam" id="NF009592">
    <property type="entry name" value="PRK13033.1"/>
    <property type="match status" value="1"/>
</dbReference>
<dbReference type="Pfam" id="PF16104">
    <property type="entry name" value="FPRL1_inhibitor"/>
    <property type="match status" value="1"/>
</dbReference>
<dbReference type="PRINTS" id="PR02037">
    <property type="entry name" value="FLIPR"/>
</dbReference>
<dbReference type="PRINTS" id="PR02035">
    <property type="entry name" value="FLIPRCHIPS"/>
</dbReference>
<evidence type="ECO:0000250" key="1"/>
<evidence type="ECO:0000255" key="2"/>
<evidence type="ECO:0000305" key="3"/>